<evidence type="ECO:0000255" key="1"/>
<evidence type="ECO:0000255" key="2">
    <source>
        <dbReference type="PROSITE-ProRule" id="PRU00352"/>
    </source>
</evidence>
<evidence type="ECO:0000256" key="3">
    <source>
        <dbReference type="SAM" id="MobiDB-lite"/>
    </source>
</evidence>
<evidence type="ECO:0000269" key="4">
    <source>
    </source>
</evidence>
<evidence type="ECO:0000269" key="5">
    <source>
    </source>
</evidence>
<evidence type="ECO:0000269" key="6">
    <source>
    </source>
</evidence>
<evidence type="ECO:0000305" key="7"/>
<evidence type="ECO:0000305" key="8">
    <source>
    </source>
</evidence>
<evidence type="ECO:0007744" key="9">
    <source>
    </source>
</evidence>
<gene>
    <name type="primary">Sema6b</name>
    <name type="synonym">Seman</name>
</gene>
<keyword id="KW-1003">Cell membrane</keyword>
<keyword id="KW-0217">Developmental protein</keyword>
<keyword id="KW-0221">Differentiation</keyword>
<keyword id="KW-1015">Disulfide bond</keyword>
<keyword id="KW-0325">Glycoprotein</keyword>
<keyword id="KW-0472">Membrane</keyword>
<keyword id="KW-0488">Methylation</keyword>
<keyword id="KW-0524">Neurogenesis</keyword>
<keyword id="KW-1185">Reference proteome</keyword>
<keyword id="KW-0732">Signal</keyword>
<keyword id="KW-0812">Transmembrane</keyword>
<keyword id="KW-1133">Transmembrane helix</keyword>
<organism>
    <name type="scientific">Mus musculus</name>
    <name type="common">Mouse</name>
    <dbReference type="NCBI Taxonomy" id="10090"/>
    <lineage>
        <taxon>Eukaryota</taxon>
        <taxon>Metazoa</taxon>
        <taxon>Chordata</taxon>
        <taxon>Craniata</taxon>
        <taxon>Vertebrata</taxon>
        <taxon>Euteleostomi</taxon>
        <taxon>Mammalia</taxon>
        <taxon>Eutheria</taxon>
        <taxon>Euarchontoglires</taxon>
        <taxon>Glires</taxon>
        <taxon>Rodentia</taxon>
        <taxon>Myomorpha</taxon>
        <taxon>Muroidea</taxon>
        <taxon>Muridae</taxon>
        <taxon>Murinae</taxon>
        <taxon>Mus</taxon>
        <taxon>Mus</taxon>
    </lineage>
</organism>
<reference key="1">
    <citation type="journal article" date="1997" name="Mol. Cell. Neurosci.">
        <title>A novel transmembrane semaphorin can bind c-src.</title>
        <authorList>
            <person name="Eckhardt F."/>
            <person name="Behar O."/>
            <person name="Calautti E."/>
            <person name="Yonezawa K."/>
            <person name="Nishimoto I."/>
            <person name="Fishman M.C."/>
        </authorList>
    </citation>
    <scope>NUCLEOTIDE SEQUENCE [MRNA]</scope>
    <scope>TISSUE SPECIFICITY</scope>
    <scope>DEVELOPMENTAL STAGE</scope>
    <scope>SUBUNIT</scope>
    <scope>INTERACTION WITH SRC</scope>
</reference>
<reference key="2">
    <citation type="journal article" date="2010" name="J. Neurosci.">
        <title>Roles of semaphorin-6B and plexin-A2 in lamina-restricted projection of hippocampal mossy fibers.</title>
        <authorList>
            <person name="Tawarayama H."/>
            <person name="Yoshida Y."/>
            <person name="Suto F."/>
            <person name="Mitchell K.J."/>
            <person name="Fujisawa H."/>
        </authorList>
    </citation>
    <scope>FUNCTION</scope>
    <scope>SUBCELLULAR LOCATION</scope>
    <scope>TISSUE SPECIFICITY</scope>
    <scope>DISRUPTION PHENOTYPE</scope>
</reference>
<reference key="3">
    <citation type="journal article" date="2014" name="Mol. Cell. Proteomics">
        <title>Immunoaffinity enrichment and mass spectrometry analysis of protein methylation.</title>
        <authorList>
            <person name="Guo A."/>
            <person name="Gu H."/>
            <person name="Zhou J."/>
            <person name="Mulhern D."/>
            <person name="Wang Y."/>
            <person name="Lee K.A."/>
            <person name="Yang V."/>
            <person name="Aguiar M."/>
            <person name="Kornhauser J."/>
            <person name="Jia X."/>
            <person name="Ren J."/>
            <person name="Beausoleil S.A."/>
            <person name="Silva J.C."/>
            <person name="Vemulapalli V."/>
            <person name="Bedford M.T."/>
            <person name="Comb M.J."/>
        </authorList>
    </citation>
    <scope>METHYLATION [LARGE SCALE ANALYSIS] AT ARG-667</scope>
    <scope>IDENTIFICATION BY MASS SPECTROMETRY [LARGE SCALE ANALYSIS]</scope>
    <source>
        <tissue>Brain</tissue>
    </source>
</reference>
<reference key="4">
    <citation type="journal article" date="2020" name="Am. J. Hum. Genet.">
        <title>De novo truncating variants in the last exon of SEMA6B Cause progressive myoclonic epilepsy.</title>
        <authorList>
            <person name="Hamanaka K."/>
            <person name="Imagawa E."/>
            <person name="Koshimizu E."/>
            <person name="Miyatake S."/>
            <person name="Tohyama J."/>
            <person name="Yamagata T."/>
            <person name="Miyauchi A."/>
            <person name="Ekhilevitch N."/>
            <person name="Nakamura F."/>
            <person name="Kawashima T."/>
            <person name="Goshima Y."/>
            <person name="Mohamed A.R."/>
            <person name="Ch'ng G.S."/>
            <person name="Fujita A."/>
            <person name="Azuma Y."/>
            <person name="Yasuda K."/>
            <person name="Imamura S."/>
            <person name="Nakashima M."/>
            <person name="Saitsu H."/>
            <person name="Mitsuhashi S."/>
            <person name="Mizuguchi T."/>
            <person name="Takata A."/>
            <person name="Miyake N."/>
            <person name="Matsumoto N."/>
        </authorList>
    </citation>
    <scope>TISSUE SPECIFICITY</scope>
    <scope>DEVELOPMENTAL STAGE</scope>
</reference>
<feature type="signal peptide" evidence="1">
    <location>
        <begin position="1"/>
        <end position="26"/>
    </location>
</feature>
<feature type="chain" id="PRO_0000032342" description="Semaphorin-6B">
    <location>
        <begin position="27"/>
        <end position="886"/>
    </location>
</feature>
<feature type="topological domain" description="Extracellular" evidence="1">
    <location>
        <begin position="27"/>
        <end position="605"/>
    </location>
</feature>
<feature type="transmembrane region" description="Helical" evidence="1">
    <location>
        <begin position="606"/>
        <end position="626"/>
    </location>
</feature>
<feature type="topological domain" description="Cytoplasmic" evidence="1">
    <location>
        <begin position="627"/>
        <end position="886"/>
    </location>
</feature>
<feature type="domain" description="Sema" evidence="2">
    <location>
        <begin position="32"/>
        <end position="525"/>
    </location>
</feature>
<feature type="region of interest" description="Disordered" evidence="3">
    <location>
        <begin position="655"/>
        <end position="677"/>
    </location>
</feature>
<feature type="region of interest" description="Disordered" evidence="3">
    <location>
        <begin position="697"/>
        <end position="731"/>
    </location>
</feature>
<feature type="region of interest" description="Disordered" evidence="3">
    <location>
        <begin position="761"/>
        <end position="886"/>
    </location>
</feature>
<feature type="compositionally biased region" description="Gly residues" evidence="3">
    <location>
        <begin position="662"/>
        <end position="674"/>
    </location>
</feature>
<feature type="compositionally biased region" description="Low complexity" evidence="3">
    <location>
        <begin position="707"/>
        <end position="718"/>
    </location>
</feature>
<feature type="modified residue" description="Omega-N-methylarginine" evidence="9">
    <location>
        <position position="667"/>
    </location>
</feature>
<feature type="glycosylation site" description="N-linked (GlcNAc...) asparagine" evidence="1">
    <location>
        <position position="75"/>
    </location>
</feature>
<feature type="glycosylation site" description="N-linked (GlcNAc...) asparagine" evidence="1">
    <location>
        <position position="156"/>
    </location>
</feature>
<feature type="glycosylation site" description="N-linked (GlcNAc...) asparagine" evidence="1">
    <location>
        <position position="292"/>
    </location>
</feature>
<feature type="glycosylation site" description="N-linked (GlcNAc...) asparagine" evidence="1">
    <location>
        <position position="387"/>
    </location>
</feature>
<feature type="glycosylation site" description="N-linked (GlcNAc...) asparagine" evidence="1">
    <location>
        <position position="442"/>
    </location>
</feature>
<feature type="glycosylation site" description="N-linked (GlcNAc...) asparagine" evidence="1">
    <location>
        <position position="463"/>
    </location>
</feature>
<feature type="disulfide bond" evidence="2">
    <location>
        <begin position="117"/>
        <end position="127"/>
    </location>
</feature>
<feature type="disulfide bond" evidence="2">
    <location>
        <begin position="145"/>
        <end position="154"/>
    </location>
</feature>
<feature type="disulfide bond" evidence="2">
    <location>
        <begin position="268"/>
        <end position="379"/>
    </location>
</feature>
<feature type="disulfide bond" evidence="2">
    <location>
        <begin position="293"/>
        <end position="338"/>
    </location>
</feature>
<feature type="disulfide bond" evidence="2">
    <location>
        <begin position="487"/>
        <end position="519"/>
    </location>
</feature>
<feature type="disulfide bond" evidence="2">
    <location>
        <begin position="528"/>
        <end position="546"/>
    </location>
</feature>
<feature type="disulfide bond" evidence="2">
    <location>
        <begin position="534"/>
        <end position="580"/>
    </location>
</feature>
<feature type="disulfide bond" evidence="2">
    <location>
        <begin position="538"/>
        <end position="554"/>
    </location>
</feature>
<name>SEM6B_MOUSE</name>
<protein>
    <recommendedName>
        <fullName>Semaphorin-6B</fullName>
    </recommendedName>
    <alternativeName>
        <fullName>Semaphorin VIB</fullName>
        <shortName>Sema VIB</shortName>
    </alternativeName>
    <alternativeName>
        <fullName>Semaphorin-N</fullName>
        <shortName>Sema N</shortName>
    </alternativeName>
</protein>
<sequence length="886" mass="95467">MWTPRVPPPRPALSFFLLLLLGVTYGLFPEEPPPLSVAPRDYLSHYPVFVGSGPGRLTAAEGAEDLNIQRVLRVNRTLFIGDRDNLYQVELEPSTSTELRYQRKLTWRSNPSDIDVCRMKGKQEGECRNFVKVLLLRDESTLFVCGSNAFNPICANYSMDTLQLLGDSISGMARCPYDPKHANVALFSDGMLFTATVTDFLAIDAVIYRSLGDRPTLRTVKHDSKWFKEPYFVHAVEWGSHVYFFFREIAMEFNYLEKVVVSRVARVCKNDVGGSPRVLEKQWTSFLKARLNCSVPGDSHFYFNVLQAVTGVVSLGGRPVILAVFSTPSNSIPGSAVCAFDMNQVAAVFEGRFREQKSPESIWTPVPEDQVPRPRPGCCAAPGMQYNASSALPDEILNFVKTHPLMDEAVPSLGHSPWIVRTLMRHQLTRVAVDVGAGPWGNQTIVFLGSEAGTVLKFLVKPNASVSGTTGPSIFLEEFETYRPDRCGRPSSAGEWGQRLLSLELDAASGGLLAAFPRCVVRVPVARCQLYSGCMKNCIGSQDPYCGWAPDGSCIFLRPGTSATFEQDVSGASTSGLGDCTGLLRASLSDDRAGLVSVNLLVTSSVAAFVVGAVVSGFSVGWFVGLRERRELARRKDKEAILAHGGSEAVLSVSRLGERRGTGPGGRGGAGGGPGGPPEALLAPLMQNGWTKAALLHGGPHDLDTGLLPTPEQTPLPQKRLPTPHPHAHALGSRAWDHSHALLSASASTSLLLLAPARASEQPQVPAEPGPESRLCAPRSCRASHPGDFPLTPHASPDRRRVVSAPTGPLDPSVGDGLPGPWSPPATSSLRRPGPHGPPTAALRRTHTFNSGEARPGGHRPRRHPPADSTHLLPCGTGERTAPPVP</sequence>
<comment type="function">
    <text evidence="4">Functions as a cell surface repellent for mossy fibers of developing neurons in the hippocampus where it plays a role in axon guidance (PubMed:20484647). May function through the PLXNA4 receptor expressed by mossy cell axons (PubMed:20484647).</text>
</comment>
<comment type="subunit">
    <text evidence="6">Homodimer (PubMed:9361278). Binds specifically the SH3 domain of the protooncogene C-SRC (PubMed:9361278).</text>
</comment>
<comment type="subcellular location">
    <subcellularLocation>
        <location evidence="8">Cell membrane</location>
        <topology evidence="1">Single-pass type I membrane protein</topology>
    </subcellularLocation>
</comment>
<comment type="tissue specificity">
    <text evidence="5 6">In adulthood, it is expressed ubiquitously.</text>
</comment>
<comment type="developmental stage">
    <text evidence="5 6">During development it is expressed in subregions of the nervous system and is particularly prominent in muscle (PubMed:32169168, PubMed:9361278). Expressed at embryonic day 18.5 dpc (PubMed:32169168).</text>
</comment>
<comment type="disruption phenotype">
    <text evidence="4">Mice lacking Sema6b are viable and fertile but display abnormal projection of hippocampal mossy fibers.</text>
</comment>
<comment type="similarity">
    <text evidence="7">Belongs to the semaphorin family.</text>
</comment>
<accession>O54951</accession>
<proteinExistence type="evidence at protein level"/>
<dbReference type="EMBL" id="AF036585">
    <property type="protein sequence ID" value="AAC00493.1"/>
    <property type="molecule type" value="mRNA"/>
</dbReference>
<dbReference type="CCDS" id="CCDS28896.1"/>
<dbReference type="RefSeq" id="NP_001123928.1">
    <property type="nucleotide sequence ID" value="NM_001130456.1"/>
</dbReference>
<dbReference type="RefSeq" id="NP_038690.1">
    <property type="nucleotide sequence ID" value="NM_013662.2"/>
</dbReference>
<dbReference type="RefSeq" id="XP_006523993.1">
    <property type="nucleotide sequence ID" value="XM_006523930.5"/>
</dbReference>
<dbReference type="SMR" id="O54951"/>
<dbReference type="BioGRID" id="203174">
    <property type="interactions" value="5"/>
</dbReference>
<dbReference type="FunCoup" id="O54951">
    <property type="interactions" value="341"/>
</dbReference>
<dbReference type="STRING" id="10090.ENSMUSP00000001256"/>
<dbReference type="GlyCosmos" id="O54951">
    <property type="glycosylation" value="6 sites, No reported glycans"/>
</dbReference>
<dbReference type="GlyGen" id="O54951">
    <property type="glycosylation" value="6 sites"/>
</dbReference>
<dbReference type="iPTMnet" id="O54951"/>
<dbReference type="PhosphoSitePlus" id="O54951"/>
<dbReference type="PaxDb" id="10090-ENSMUSP00000130985"/>
<dbReference type="ProteomicsDB" id="256948"/>
<dbReference type="Antibodypedia" id="57701">
    <property type="antibodies" value="113 antibodies from 22 providers"/>
</dbReference>
<dbReference type="DNASU" id="20359"/>
<dbReference type="Ensembl" id="ENSMUST00000001256.11">
    <property type="protein sequence ID" value="ENSMUSP00000001256.5"/>
    <property type="gene ID" value="ENSMUSG00000001227.13"/>
</dbReference>
<dbReference type="Ensembl" id="ENSMUST00000167545.3">
    <property type="protein sequence ID" value="ENSMUSP00000130985.2"/>
    <property type="gene ID" value="ENSMUSG00000001227.13"/>
</dbReference>
<dbReference type="GeneID" id="20359"/>
<dbReference type="KEGG" id="mmu:20359"/>
<dbReference type="UCSC" id="uc008dbd.2">
    <property type="organism name" value="mouse"/>
</dbReference>
<dbReference type="AGR" id="MGI:1202889"/>
<dbReference type="CTD" id="10501"/>
<dbReference type="MGI" id="MGI:1202889">
    <property type="gene designation" value="Sema6b"/>
</dbReference>
<dbReference type="VEuPathDB" id="HostDB:ENSMUSG00000001227"/>
<dbReference type="eggNOG" id="KOG3611">
    <property type="taxonomic scope" value="Eukaryota"/>
</dbReference>
<dbReference type="GeneTree" id="ENSGT00940000159170"/>
<dbReference type="HOGENOM" id="CLU_009051_2_1_1"/>
<dbReference type="InParanoid" id="O54951"/>
<dbReference type="OMA" id="DHMRGDH"/>
<dbReference type="OrthoDB" id="9988752at2759"/>
<dbReference type="PhylomeDB" id="O54951"/>
<dbReference type="TreeFam" id="TF316102"/>
<dbReference type="BioGRID-ORCS" id="20359">
    <property type="hits" value="1 hit in 78 CRISPR screens"/>
</dbReference>
<dbReference type="ChiTaRS" id="Sema6b">
    <property type="organism name" value="mouse"/>
</dbReference>
<dbReference type="PRO" id="PR:O54951"/>
<dbReference type="Proteomes" id="UP000000589">
    <property type="component" value="Chromosome 17"/>
</dbReference>
<dbReference type="RNAct" id="O54951">
    <property type="molecule type" value="protein"/>
</dbReference>
<dbReference type="Bgee" id="ENSMUSG00000001227">
    <property type="expression patterns" value="Expressed in superior frontal gyrus and 124 other cell types or tissues"/>
</dbReference>
<dbReference type="ExpressionAtlas" id="O54951">
    <property type="expression patterns" value="baseline and differential"/>
</dbReference>
<dbReference type="GO" id="GO:0005886">
    <property type="term" value="C:plasma membrane"/>
    <property type="evidence" value="ECO:0007669"/>
    <property type="project" value="UniProtKB-SubCell"/>
</dbReference>
<dbReference type="GO" id="GO:0030215">
    <property type="term" value="F:semaphorin receptor binding"/>
    <property type="evidence" value="ECO:0000353"/>
    <property type="project" value="MGI"/>
</dbReference>
<dbReference type="GO" id="GO:0007411">
    <property type="term" value="P:axon guidance"/>
    <property type="evidence" value="ECO:0000315"/>
    <property type="project" value="UniProtKB"/>
</dbReference>
<dbReference type="GO" id="GO:0007417">
    <property type="term" value="P:central nervous system development"/>
    <property type="evidence" value="ECO:0000250"/>
    <property type="project" value="UniProtKB"/>
</dbReference>
<dbReference type="GO" id="GO:0021766">
    <property type="term" value="P:hippocampus development"/>
    <property type="evidence" value="ECO:0000315"/>
    <property type="project" value="UniProtKB"/>
</dbReference>
<dbReference type="CDD" id="cd11267">
    <property type="entry name" value="Sema_6B"/>
    <property type="match status" value="1"/>
</dbReference>
<dbReference type="FunFam" id="3.30.1680.10:FF:000009">
    <property type="entry name" value="Semaphorin 6B isoform 3 variant"/>
    <property type="match status" value="1"/>
</dbReference>
<dbReference type="FunFam" id="2.130.10.10:FF:000028">
    <property type="entry name" value="semaphorin-6A isoform X1"/>
    <property type="match status" value="1"/>
</dbReference>
<dbReference type="Gene3D" id="3.30.1680.10">
    <property type="entry name" value="ligand-binding face of the semaphorins, domain 2"/>
    <property type="match status" value="1"/>
</dbReference>
<dbReference type="Gene3D" id="2.130.10.10">
    <property type="entry name" value="YVTN repeat-like/Quinoprotein amine dehydrogenase"/>
    <property type="match status" value="1"/>
</dbReference>
<dbReference type="InterPro" id="IPR002165">
    <property type="entry name" value="Plexin_repeat"/>
</dbReference>
<dbReference type="InterPro" id="IPR001627">
    <property type="entry name" value="Semap_dom"/>
</dbReference>
<dbReference type="InterPro" id="IPR036352">
    <property type="entry name" value="Semap_dom_sf"/>
</dbReference>
<dbReference type="InterPro" id="IPR027231">
    <property type="entry name" value="Semaphorin"/>
</dbReference>
<dbReference type="InterPro" id="IPR015943">
    <property type="entry name" value="WD40/YVTN_repeat-like_dom_sf"/>
</dbReference>
<dbReference type="PANTHER" id="PTHR11036">
    <property type="entry name" value="SEMAPHORIN"/>
    <property type="match status" value="1"/>
</dbReference>
<dbReference type="PANTHER" id="PTHR11036:SF10">
    <property type="entry name" value="SEMAPHORIN-6B"/>
    <property type="match status" value="1"/>
</dbReference>
<dbReference type="Pfam" id="PF01437">
    <property type="entry name" value="PSI"/>
    <property type="match status" value="1"/>
</dbReference>
<dbReference type="Pfam" id="PF01403">
    <property type="entry name" value="Sema"/>
    <property type="match status" value="1"/>
</dbReference>
<dbReference type="SMART" id="SM00630">
    <property type="entry name" value="Sema"/>
    <property type="match status" value="1"/>
</dbReference>
<dbReference type="SUPFAM" id="SSF103575">
    <property type="entry name" value="Plexin repeat"/>
    <property type="match status" value="1"/>
</dbReference>
<dbReference type="SUPFAM" id="SSF101912">
    <property type="entry name" value="Sema domain"/>
    <property type="match status" value="1"/>
</dbReference>
<dbReference type="PROSITE" id="PS51004">
    <property type="entry name" value="SEMA"/>
    <property type="match status" value="1"/>
</dbReference>